<sequence>MSGKKRTASSNRWMLEHFDDHYVKLAQKRGLRSRAAFKLEELQQKDQLIRPGMTVVDLGAAPGGWSQVAVKLVGDRGKVIACDILPMDPIVGVDFLQGDFREEKVLEALLTRVGADKVDVVLSDMAPNMSGSDGVDQPRAMYLVELALDMCHQVLAPNGSFAVKVFQGEGFDEYMKAVKEAFKVVKTRKPDSSRARSREVYLVATGYKL</sequence>
<proteinExistence type="inferred from homology"/>
<comment type="function">
    <text evidence="1">Specifically methylates the uridine in position 2552 of 23S rRNA at the 2'-O position of the ribose in the fully assembled 50S ribosomal subunit.</text>
</comment>
<comment type="catalytic activity">
    <reaction evidence="1">
        <text>uridine(2552) in 23S rRNA + S-adenosyl-L-methionine = 2'-O-methyluridine(2552) in 23S rRNA + S-adenosyl-L-homocysteine + H(+)</text>
        <dbReference type="Rhea" id="RHEA:42720"/>
        <dbReference type="Rhea" id="RHEA-COMP:10202"/>
        <dbReference type="Rhea" id="RHEA-COMP:10203"/>
        <dbReference type="ChEBI" id="CHEBI:15378"/>
        <dbReference type="ChEBI" id="CHEBI:57856"/>
        <dbReference type="ChEBI" id="CHEBI:59789"/>
        <dbReference type="ChEBI" id="CHEBI:65315"/>
        <dbReference type="ChEBI" id="CHEBI:74478"/>
        <dbReference type="EC" id="2.1.1.166"/>
    </reaction>
</comment>
<comment type="subcellular location">
    <subcellularLocation>
        <location evidence="1">Cytoplasm</location>
    </subcellularLocation>
</comment>
<comment type="similarity">
    <text evidence="1">Belongs to the class I-like SAM-binding methyltransferase superfamily. RNA methyltransferase RlmE family.</text>
</comment>
<accession>A4Y9C8</accession>
<name>RLME_SHEPC</name>
<gene>
    <name evidence="1" type="primary">rlmE</name>
    <name evidence="1" type="synonym">ftsJ</name>
    <name evidence="1" type="synonym">rrmJ</name>
    <name type="ordered locus">Sputcn32_2842</name>
</gene>
<keyword id="KW-0963">Cytoplasm</keyword>
<keyword id="KW-0489">Methyltransferase</keyword>
<keyword id="KW-0698">rRNA processing</keyword>
<keyword id="KW-0949">S-adenosyl-L-methionine</keyword>
<keyword id="KW-0808">Transferase</keyword>
<organism>
    <name type="scientific">Shewanella putrefaciens (strain CN-32 / ATCC BAA-453)</name>
    <dbReference type="NCBI Taxonomy" id="319224"/>
    <lineage>
        <taxon>Bacteria</taxon>
        <taxon>Pseudomonadati</taxon>
        <taxon>Pseudomonadota</taxon>
        <taxon>Gammaproteobacteria</taxon>
        <taxon>Alteromonadales</taxon>
        <taxon>Shewanellaceae</taxon>
        <taxon>Shewanella</taxon>
    </lineage>
</organism>
<dbReference type="EC" id="2.1.1.166" evidence="1"/>
<dbReference type="EMBL" id="CP000681">
    <property type="protein sequence ID" value="ABP76561.1"/>
    <property type="molecule type" value="Genomic_DNA"/>
</dbReference>
<dbReference type="SMR" id="A4Y9C8"/>
<dbReference type="STRING" id="319224.Sputcn32_2842"/>
<dbReference type="KEGG" id="spc:Sputcn32_2842"/>
<dbReference type="eggNOG" id="COG0293">
    <property type="taxonomic scope" value="Bacteria"/>
</dbReference>
<dbReference type="HOGENOM" id="CLU_009422_4_0_6"/>
<dbReference type="GO" id="GO:0005737">
    <property type="term" value="C:cytoplasm"/>
    <property type="evidence" value="ECO:0007669"/>
    <property type="project" value="UniProtKB-SubCell"/>
</dbReference>
<dbReference type="GO" id="GO:0008650">
    <property type="term" value="F:rRNA (uridine-2'-O-)-methyltransferase activity"/>
    <property type="evidence" value="ECO:0007669"/>
    <property type="project" value="UniProtKB-UniRule"/>
</dbReference>
<dbReference type="FunFam" id="3.40.50.150:FF:000005">
    <property type="entry name" value="Ribosomal RNA large subunit methyltransferase E"/>
    <property type="match status" value="1"/>
</dbReference>
<dbReference type="Gene3D" id="3.40.50.150">
    <property type="entry name" value="Vaccinia Virus protein VP39"/>
    <property type="match status" value="1"/>
</dbReference>
<dbReference type="HAMAP" id="MF_01547">
    <property type="entry name" value="RNA_methyltr_E"/>
    <property type="match status" value="1"/>
</dbReference>
<dbReference type="InterPro" id="IPR050082">
    <property type="entry name" value="RNA_methyltr_RlmE"/>
</dbReference>
<dbReference type="InterPro" id="IPR002877">
    <property type="entry name" value="RNA_MeTrfase_FtsJ_dom"/>
</dbReference>
<dbReference type="InterPro" id="IPR015507">
    <property type="entry name" value="rRNA-MeTfrase_E"/>
</dbReference>
<dbReference type="InterPro" id="IPR029063">
    <property type="entry name" value="SAM-dependent_MTases_sf"/>
</dbReference>
<dbReference type="NCBIfam" id="NF008390">
    <property type="entry name" value="PRK11188.1"/>
    <property type="match status" value="1"/>
</dbReference>
<dbReference type="PANTHER" id="PTHR10920">
    <property type="entry name" value="RIBOSOMAL RNA METHYLTRANSFERASE"/>
    <property type="match status" value="1"/>
</dbReference>
<dbReference type="PANTHER" id="PTHR10920:SF18">
    <property type="entry name" value="RRNA METHYLTRANSFERASE 2, MITOCHONDRIAL"/>
    <property type="match status" value="1"/>
</dbReference>
<dbReference type="Pfam" id="PF01728">
    <property type="entry name" value="FtsJ"/>
    <property type="match status" value="1"/>
</dbReference>
<dbReference type="PIRSF" id="PIRSF005461">
    <property type="entry name" value="23S_rRNA_mtase"/>
    <property type="match status" value="1"/>
</dbReference>
<dbReference type="SUPFAM" id="SSF53335">
    <property type="entry name" value="S-adenosyl-L-methionine-dependent methyltransferases"/>
    <property type="match status" value="1"/>
</dbReference>
<feature type="chain" id="PRO_1000087717" description="Ribosomal RNA large subunit methyltransferase E">
    <location>
        <begin position="1"/>
        <end position="209"/>
    </location>
</feature>
<feature type="active site" description="Proton acceptor" evidence="1">
    <location>
        <position position="164"/>
    </location>
</feature>
<feature type="binding site" evidence="1">
    <location>
        <position position="63"/>
    </location>
    <ligand>
        <name>S-adenosyl-L-methionine</name>
        <dbReference type="ChEBI" id="CHEBI:59789"/>
    </ligand>
</feature>
<feature type="binding site" evidence="1">
    <location>
        <position position="65"/>
    </location>
    <ligand>
        <name>S-adenosyl-L-methionine</name>
        <dbReference type="ChEBI" id="CHEBI:59789"/>
    </ligand>
</feature>
<feature type="binding site" evidence="1">
    <location>
        <position position="83"/>
    </location>
    <ligand>
        <name>S-adenosyl-L-methionine</name>
        <dbReference type="ChEBI" id="CHEBI:59789"/>
    </ligand>
</feature>
<feature type="binding site" evidence="1">
    <location>
        <position position="99"/>
    </location>
    <ligand>
        <name>S-adenosyl-L-methionine</name>
        <dbReference type="ChEBI" id="CHEBI:59789"/>
    </ligand>
</feature>
<feature type="binding site" evidence="1">
    <location>
        <position position="124"/>
    </location>
    <ligand>
        <name>S-adenosyl-L-methionine</name>
        <dbReference type="ChEBI" id="CHEBI:59789"/>
    </ligand>
</feature>
<evidence type="ECO:0000255" key="1">
    <source>
        <dbReference type="HAMAP-Rule" id="MF_01547"/>
    </source>
</evidence>
<protein>
    <recommendedName>
        <fullName evidence="1">Ribosomal RNA large subunit methyltransferase E</fullName>
        <ecNumber evidence="1">2.1.1.166</ecNumber>
    </recommendedName>
    <alternativeName>
        <fullName evidence="1">23S rRNA Um2552 methyltransferase</fullName>
    </alternativeName>
    <alternativeName>
        <fullName evidence="1">rRNA (uridine-2'-O-)-methyltransferase</fullName>
    </alternativeName>
</protein>
<reference key="1">
    <citation type="submission" date="2007-04" db="EMBL/GenBank/DDBJ databases">
        <title>Complete sequence of Shewanella putrefaciens CN-32.</title>
        <authorList>
            <consortium name="US DOE Joint Genome Institute"/>
            <person name="Copeland A."/>
            <person name="Lucas S."/>
            <person name="Lapidus A."/>
            <person name="Barry K."/>
            <person name="Detter J.C."/>
            <person name="Glavina del Rio T."/>
            <person name="Hammon N."/>
            <person name="Israni S."/>
            <person name="Dalin E."/>
            <person name="Tice H."/>
            <person name="Pitluck S."/>
            <person name="Chain P."/>
            <person name="Malfatti S."/>
            <person name="Shin M."/>
            <person name="Vergez L."/>
            <person name="Schmutz J."/>
            <person name="Larimer F."/>
            <person name="Land M."/>
            <person name="Hauser L."/>
            <person name="Kyrpides N."/>
            <person name="Mikhailova N."/>
            <person name="Romine M.F."/>
            <person name="Fredrickson J."/>
            <person name="Tiedje J."/>
            <person name="Richardson P."/>
        </authorList>
    </citation>
    <scope>NUCLEOTIDE SEQUENCE [LARGE SCALE GENOMIC DNA]</scope>
    <source>
        <strain>CN-32 / ATCC BAA-453</strain>
    </source>
</reference>